<feature type="signal peptide" evidence="3">
    <location>
        <begin position="1"/>
        <end position="34"/>
    </location>
</feature>
<feature type="chain" id="PRO_0000253557" description="Delta and Notch-like epidermal growth factor-related receptor">
    <location>
        <begin position="35"/>
        <end position="737"/>
    </location>
</feature>
<feature type="topological domain" description="Extracellular" evidence="3">
    <location>
        <begin position="35"/>
        <end position="640"/>
    </location>
</feature>
<feature type="transmembrane region" description="Helical" evidence="3">
    <location>
        <begin position="641"/>
        <end position="661"/>
    </location>
</feature>
<feature type="topological domain" description="Cytoplasmic" evidence="3">
    <location>
        <begin position="662"/>
        <end position="737"/>
    </location>
</feature>
<feature type="domain" description="EGF-like 1" evidence="4">
    <location>
        <begin position="44"/>
        <end position="92"/>
    </location>
</feature>
<feature type="domain" description="EGF-like 2" evidence="4">
    <location>
        <begin position="94"/>
        <end position="133"/>
    </location>
</feature>
<feature type="domain" description="EGF-like 3" evidence="4">
    <location>
        <begin position="309"/>
        <end position="348"/>
    </location>
</feature>
<feature type="domain" description="EGF-like 4" evidence="4">
    <location>
        <begin position="349"/>
        <end position="390"/>
    </location>
</feature>
<feature type="domain" description="EGF-like 5" evidence="4">
    <location>
        <begin position="392"/>
        <end position="428"/>
    </location>
</feature>
<feature type="domain" description="EGF-like 6" evidence="4">
    <location>
        <begin position="430"/>
        <end position="466"/>
    </location>
</feature>
<feature type="domain" description="EGF-like 7" evidence="4">
    <location>
        <begin position="468"/>
        <end position="503"/>
    </location>
</feature>
<feature type="domain" description="EGF-like 8; calcium-binding" evidence="4">
    <location>
        <begin position="505"/>
        <end position="541"/>
    </location>
</feature>
<feature type="domain" description="EGF-like 9" evidence="4">
    <location>
        <begin position="543"/>
        <end position="579"/>
    </location>
</feature>
<feature type="domain" description="Follistatin-like">
    <location>
        <begin position="546"/>
        <end position="568"/>
    </location>
</feature>
<feature type="domain" description="EGF-like 10; calcium-binding" evidence="4">
    <location>
        <begin position="581"/>
        <end position="617"/>
    </location>
</feature>
<feature type="region of interest" description="Interaction with NOTCH1" evidence="1">
    <location>
        <begin position="44"/>
        <end position="133"/>
    </location>
</feature>
<feature type="region of interest" description="Interaction with AP1G1 and somatodendritic targeting" evidence="1">
    <location>
        <begin position="677"/>
        <end position="680"/>
    </location>
</feature>
<feature type="modified residue" description="Phosphoserine" evidence="2">
    <location>
        <position position="685"/>
    </location>
</feature>
<feature type="modified residue" description="Phosphotyrosine" evidence="2">
    <location>
        <position position="711"/>
    </location>
</feature>
<feature type="modified residue" description="Phosphotyrosine" evidence="2">
    <location>
        <position position="721"/>
    </location>
</feature>
<feature type="modified residue" description="Phosphoserine" evidence="2">
    <location>
        <position position="722"/>
    </location>
</feature>
<feature type="glycosylation site" description="N-linked (GlcNAc...) asparagine" evidence="7">
    <location>
        <position position="223"/>
    </location>
</feature>
<feature type="glycosylation site" description="N-linked (GlcNAc...) asparagine" evidence="3">
    <location>
        <position position="564"/>
    </location>
</feature>
<feature type="disulfide bond" evidence="4">
    <location>
        <begin position="48"/>
        <end position="59"/>
    </location>
</feature>
<feature type="disulfide bond" evidence="4">
    <location>
        <begin position="53"/>
        <end position="80"/>
    </location>
</feature>
<feature type="disulfide bond" evidence="4">
    <location>
        <begin position="82"/>
        <end position="91"/>
    </location>
</feature>
<feature type="disulfide bond" evidence="4">
    <location>
        <begin position="98"/>
        <end position="108"/>
    </location>
</feature>
<feature type="disulfide bond" evidence="4">
    <location>
        <begin position="103"/>
        <end position="121"/>
    </location>
</feature>
<feature type="disulfide bond" evidence="4">
    <location>
        <begin position="123"/>
        <end position="132"/>
    </location>
</feature>
<feature type="disulfide bond" evidence="4">
    <location>
        <begin position="319"/>
        <end position="336"/>
    </location>
</feature>
<feature type="disulfide bond" evidence="4">
    <location>
        <begin position="338"/>
        <end position="347"/>
    </location>
</feature>
<feature type="disulfide bond" evidence="4">
    <location>
        <begin position="353"/>
        <end position="364"/>
    </location>
</feature>
<feature type="disulfide bond" evidence="4">
    <location>
        <begin position="358"/>
        <end position="378"/>
    </location>
</feature>
<feature type="disulfide bond" evidence="4">
    <location>
        <begin position="380"/>
        <end position="389"/>
    </location>
</feature>
<feature type="disulfide bond" evidence="4">
    <location>
        <begin position="396"/>
        <end position="407"/>
    </location>
</feature>
<feature type="disulfide bond" evidence="4">
    <location>
        <begin position="401"/>
        <end position="416"/>
    </location>
</feature>
<feature type="disulfide bond" evidence="4">
    <location>
        <begin position="418"/>
        <end position="427"/>
    </location>
</feature>
<feature type="disulfide bond" evidence="4">
    <location>
        <begin position="434"/>
        <end position="445"/>
    </location>
</feature>
<feature type="disulfide bond" evidence="4">
    <location>
        <begin position="439"/>
        <end position="454"/>
    </location>
</feature>
<feature type="disulfide bond" evidence="4">
    <location>
        <begin position="456"/>
        <end position="465"/>
    </location>
</feature>
<feature type="disulfide bond" evidence="4">
    <location>
        <begin position="472"/>
        <end position="482"/>
    </location>
</feature>
<feature type="disulfide bond" evidence="4">
    <location>
        <begin position="477"/>
        <end position="491"/>
    </location>
</feature>
<feature type="disulfide bond" evidence="4">
    <location>
        <begin position="493"/>
        <end position="502"/>
    </location>
</feature>
<feature type="disulfide bond" evidence="4">
    <location>
        <begin position="509"/>
        <end position="520"/>
    </location>
</feature>
<feature type="disulfide bond" evidence="4">
    <location>
        <begin position="514"/>
        <end position="529"/>
    </location>
</feature>
<feature type="disulfide bond" evidence="4">
    <location>
        <begin position="531"/>
        <end position="540"/>
    </location>
</feature>
<feature type="disulfide bond" evidence="4">
    <location>
        <begin position="547"/>
        <end position="558"/>
    </location>
</feature>
<feature type="disulfide bond" evidence="4">
    <location>
        <begin position="552"/>
        <end position="567"/>
    </location>
</feature>
<feature type="disulfide bond" evidence="4">
    <location>
        <begin position="569"/>
        <end position="578"/>
    </location>
</feature>
<feature type="disulfide bond" evidence="4">
    <location>
        <begin position="585"/>
        <end position="596"/>
    </location>
</feature>
<feature type="disulfide bond" evidence="4">
    <location>
        <begin position="590"/>
        <end position="605"/>
    </location>
</feature>
<feature type="disulfide bond" evidence="4">
    <location>
        <begin position="607"/>
        <end position="616"/>
    </location>
</feature>
<feature type="sequence variant" id="VAR_028380" description="In dbSNP:rs17853365." evidence="6">
    <original>P</original>
    <variation>L</variation>
    <location>
        <position position="433"/>
    </location>
</feature>
<dbReference type="EMBL" id="AF442487">
    <property type="protein sequence ID" value="AAM21557.1"/>
    <property type="molecule type" value="mRNA"/>
</dbReference>
<dbReference type="EMBL" id="AY358891">
    <property type="protein sequence ID" value="AAQ89250.1"/>
    <property type="molecule type" value="mRNA"/>
</dbReference>
<dbReference type="EMBL" id="AC007559">
    <property type="protein sequence ID" value="AAY14939.1"/>
    <property type="molecule type" value="Genomic_DNA"/>
</dbReference>
<dbReference type="EMBL" id="AC007748">
    <property type="protein sequence ID" value="AAY24263.1"/>
    <property type="molecule type" value="Genomic_DNA"/>
</dbReference>
<dbReference type="EMBL" id="AC008273">
    <property type="protein sequence ID" value="AAF19247.2"/>
    <property type="molecule type" value="Genomic_DNA"/>
</dbReference>
<dbReference type="EMBL" id="AC093384">
    <property type="protein sequence ID" value="AAY14680.1"/>
    <property type="molecule type" value="Genomic_DNA"/>
</dbReference>
<dbReference type="EMBL" id="CH471063">
    <property type="protein sequence ID" value="EAW70893.1"/>
    <property type="molecule type" value="Genomic_DNA"/>
</dbReference>
<dbReference type="EMBL" id="BC024766">
    <property type="protein sequence ID" value="AAH24766.2"/>
    <property type="molecule type" value="mRNA"/>
</dbReference>
<dbReference type="EMBL" id="BC035009">
    <property type="protein sequence ID" value="AAH35009.1"/>
    <property type="molecule type" value="mRNA"/>
</dbReference>
<dbReference type="EMBL" id="AL137311">
    <property type="protein sequence ID" value="CAB70690.1"/>
    <property type="molecule type" value="mRNA"/>
</dbReference>
<dbReference type="CCDS" id="CCDS33390.1"/>
<dbReference type="PIR" id="T46247">
    <property type="entry name" value="T46247"/>
</dbReference>
<dbReference type="RefSeq" id="NP_620711.3">
    <property type="nucleotide sequence ID" value="NM_139072.3"/>
</dbReference>
<dbReference type="SMR" id="Q8NFT8"/>
<dbReference type="BioGRID" id="124973">
    <property type="interactions" value="5"/>
</dbReference>
<dbReference type="DIP" id="DIP-46249N"/>
<dbReference type="FunCoup" id="Q8NFT8">
    <property type="interactions" value="324"/>
</dbReference>
<dbReference type="IntAct" id="Q8NFT8">
    <property type="interactions" value="7"/>
</dbReference>
<dbReference type="STRING" id="9606.ENSP00000345229"/>
<dbReference type="BindingDB" id="Q8NFT8"/>
<dbReference type="ChEMBL" id="CHEMBL5291567"/>
<dbReference type="GlyCosmos" id="Q8NFT8">
    <property type="glycosylation" value="2 sites, No reported glycans"/>
</dbReference>
<dbReference type="GlyGen" id="Q8NFT8">
    <property type="glycosylation" value="10 sites, 4 N-linked glycans (4 sites), 1 O-linked glycan (5 sites)"/>
</dbReference>
<dbReference type="iPTMnet" id="Q8NFT8"/>
<dbReference type="PhosphoSitePlus" id="Q8NFT8"/>
<dbReference type="BioMuta" id="DNER"/>
<dbReference type="DMDM" id="74730301"/>
<dbReference type="jPOST" id="Q8NFT8"/>
<dbReference type="MassIVE" id="Q8NFT8"/>
<dbReference type="PaxDb" id="9606-ENSP00000345229"/>
<dbReference type="PeptideAtlas" id="Q8NFT8"/>
<dbReference type="ProteomicsDB" id="73354"/>
<dbReference type="Antibodypedia" id="2715">
    <property type="antibodies" value="233 antibodies from 30 providers"/>
</dbReference>
<dbReference type="DNASU" id="92737"/>
<dbReference type="Ensembl" id="ENST00000341772.5">
    <property type="protein sequence ID" value="ENSP00000345229.4"/>
    <property type="gene ID" value="ENSG00000187957.8"/>
</dbReference>
<dbReference type="GeneID" id="92737"/>
<dbReference type="KEGG" id="hsa:92737"/>
<dbReference type="MANE-Select" id="ENST00000341772.5">
    <property type="protein sequence ID" value="ENSP00000345229.4"/>
    <property type="RefSeq nucleotide sequence ID" value="NM_139072.4"/>
    <property type="RefSeq protein sequence ID" value="NP_620711.3"/>
</dbReference>
<dbReference type="UCSC" id="uc002vpv.4">
    <property type="organism name" value="human"/>
</dbReference>
<dbReference type="AGR" id="HGNC:24456"/>
<dbReference type="CTD" id="92737"/>
<dbReference type="DisGeNET" id="92737"/>
<dbReference type="GeneCards" id="DNER"/>
<dbReference type="HGNC" id="HGNC:24456">
    <property type="gene designation" value="DNER"/>
</dbReference>
<dbReference type="HPA" id="ENSG00000187957">
    <property type="expression patterns" value="Tissue enhanced (adrenal gland, brain, choroid plexus)"/>
</dbReference>
<dbReference type="MIM" id="607299">
    <property type="type" value="gene"/>
</dbReference>
<dbReference type="neXtProt" id="NX_Q8NFT8"/>
<dbReference type="OpenTargets" id="ENSG00000187957"/>
<dbReference type="PharmGKB" id="PA162383959"/>
<dbReference type="VEuPathDB" id="HostDB:ENSG00000187957"/>
<dbReference type="eggNOG" id="KOG1217">
    <property type="taxonomic scope" value="Eukaryota"/>
</dbReference>
<dbReference type="GeneTree" id="ENSGT00940000158872"/>
<dbReference type="HOGENOM" id="CLU_019513_0_0_1"/>
<dbReference type="InParanoid" id="Q8NFT8"/>
<dbReference type="OMA" id="CECEDAY"/>
<dbReference type="OrthoDB" id="283575at2759"/>
<dbReference type="PAN-GO" id="Q8NFT8">
    <property type="GO annotations" value="1 GO annotation based on evolutionary models"/>
</dbReference>
<dbReference type="PhylomeDB" id="Q8NFT8"/>
<dbReference type="TreeFam" id="TF351322"/>
<dbReference type="PathwayCommons" id="Q8NFT8"/>
<dbReference type="Reactome" id="R-HSA-2122948">
    <property type="pathway name" value="Activated NOTCH1 Transmits Signal to the Nucleus"/>
</dbReference>
<dbReference type="SignaLink" id="Q8NFT8"/>
<dbReference type="SIGNOR" id="Q8NFT8"/>
<dbReference type="BioGRID-ORCS" id="92737">
    <property type="hits" value="9 hits in 1153 CRISPR screens"/>
</dbReference>
<dbReference type="ChiTaRS" id="DNER">
    <property type="organism name" value="human"/>
</dbReference>
<dbReference type="GeneWiki" id="DNER"/>
<dbReference type="GenomeRNAi" id="92737"/>
<dbReference type="Pharos" id="Q8NFT8">
    <property type="development level" value="Tbio"/>
</dbReference>
<dbReference type="PRO" id="PR:Q8NFT8"/>
<dbReference type="Proteomes" id="UP000005640">
    <property type="component" value="Chromosome 2"/>
</dbReference>
<dbReference type="RNAct" id="Q8NFT8">
    <property type="molecule type" value="protein"/>
</dbReference>
<dbReference type="Bgee" id="ENSG00000187957">
    <property type="expression patterns" value="Expressed in lateral nuclear group of thalamus and 149 other cell types or tissues"/>
</dbReference>
<dbReference type="GO" id="GO:0030425">
    <property type="term" value="C:dendrite"/>
    <property type="evidence" value="ECO:0000314"/>
    <property type="project" value="UniProtKB"/>
</dbReference>
<dbReference type="GO" id="GO:0005769">
    <property type="term" value="C:early endosome"/>
    <property type="evidence" value="ECO:0000314"/>
    <property type="project" value="UniProtKB"/>
</dbReference>
<dbReference type="GO" id="GO:0043025">
    <property type="term" value="C:neuronal cell body"/>
    <property type="evidence" value="ECO:0007669"/>
    <property type="project" value="Ensembl"/>
</dbReference>
<dbReference type="GO" id="GO:0005886">
    <property type="term" value="C:plasma membrane"/>
    <property type="evidence" value="ECO:0000314"/>
    <property type="project" value="UniProtKB"/>
</dbReference>
<dbReference type="GO" id="GO:0005509">
    <property type="term" value="F:calcium ion binding"/>
    <property type="evidence" value="ECO:0000303"/>
    <property type="project" value="UniProtKB"/>
</dbReference>
<dbReference type="GO" id="GO:0030276">
    <property type="term" value="F:clathrin binding"/>
    <property type="evidence" value="ECO:0000304"/>
    <property type="project" value="UniProtKB"/>
</dbReference>
<dbReference type="GO" id="GO:0005112">
    <property type="term" value="F:Notch binding"/>
    <property type="evidence" value="ECO:0000318"/>
    <property type="project" value="GO_Central"/>
</dbReference>
<dbReference type="GO" id="GO:0004888">
    <property type="term" value="F:transmembrane signaling receptor activity"/>
    <property type="evidence" value="ECO:0000304"/>
    <property type="project" value="UniProtKB"/>
</dbReference>
<dbReference type="GO" id="GO:0007417">
    <property type="term" value="P:central nervous system development"/>
    <property type="evidence" value="ECO:0000270"/>
    <property type="project" value="UniProtKB"/>
</dbReference>
<dbReference type="GO" id="GO:0006897">
    <property type="term" value="P:endocytosis"/>
    <property type="evidence" value="ECO:0000303"/>
    <property type="project" value="UniProtKB"/>
</dbReference>
<dbReference type="GO" id="GO:0010001">
    <property type="term" value="P:glial cell differentiation"/>
    <property type="evidence" value="ECO:0007669"/>
    <property type="project" value="Ensembl"/>
</dbReference>
<dbReference type="GO" id="GO:0001764">
    <property type="term" value="P:neuron migration"/>
    <property type="evidence" value="ECO:0000303"/>
    <property type="project" value="UniProtKB"/>
</dbReference>
<dbReference type="GO" id="GO:0007220">
    <property type="term" value="P:Notch receptor processing"/>
    <property type="evidence" value="ECO:0007669"/>
    <property type="project" value="Ensembl"/>
</dbReference>
<dbReference type="GO" id="GO:0007219">
    <property type="term" value="P:Notch signaling pathway"/>
    <property type="evidence" value="ECO:0007669"/>
    <property type="project" value="UniProtKB-KW"/>
</dbReference>
<dbReference type="GO" id="GO:0048741">
    <property type="term" value="P:skeletal muscle fiber development"/>
    <property type="evidence" value="ECO:0007669"/>
    <property type="project" value="Ensembl"/>
</dbReference>
<dbReference type="GO" id="GO:0007416">
    <property type="term" value="P:synapse assembly"/>
    <property type="evidence" value="ECO:0000303"/>
    <property type="project" value="UniProtKB"/>
</dbReference>
<dbReference type="CDD" id="cd00054">
    <property type="entry name" value="EGF_CA"/>
    <property type="match status" value="6"/>
</dbReference>
<dbReference type="FunFam" id="2.10.25.10:FF:000566">
    <property type="entry name" value="delta and Notch-like epidermal growth factor-related receptor"/>
    <property type="match status" value="1"/>
</dbReference>
<dbReference type="FunFam" id="2.10.25.10:FF:000609">
    <property type="entry name" value="delta and Notch-like epidermal growth factor-related receptor"/>
    <property type="match status" value="1"/>
</dbReference>
<dbReference type="FunFam" id="2.10.25.10:FF:000247">
    <property type="entry name" value="Delta/notch like EGF repeat containing"/>
    <property type="match status" value="1"/>
</dbReference>
<dbReference type="FunFam" id="2.10.25.10:FF:000353">
    <property type="entry name" value="Delta/notch like EGF repeat containing"/>
    <property type="match status" value="1"/>
</dbReference>
<dbReference type="FunFam" id="2.10.25.10:FF:000377">
    <property type="entry name" value="Delta/notch like EGF repeat containing"/>
    <property type="match status" value="1"/>
</dbReference>
<dbReference type="FunFam" id="2.10.25.10:FF:000523">
    <property type="entry name" value="Delta/notch like EGF repeat containing"/>
    <property type="match status" value="1"/>
</dbReference>
<dbReference type="FunFam" id="2.10.25.10:FF:000667">
    <property type="entry name" value="Delta/notch like EGF repeat containing"/>
    <property type="match status" value="1"/>
</dbReference>
<dbReference type="FunFam" id="2.10.25.10:FF:000703">
    <property type="entry name" value="Delta/notch like EGF repeat containing"/>
    <property type="match status" value="1"/>
</dbReference>
<dbReference type="FunFam" id="2.10.25.10:FF:000714">
    <property type="entry name" value="Delta/notch like EGF repeat containing"/>
    <property type="match status" value="1"/>
</dbReference>
<dbReference type="FunFam" id="2.10.25.10:FF:000597">
    <property type="entry name" value="Delta/notch-like EGF repeat containing"/>
    <property type="match status" value="1"/>
</dbReference>
<dbReference type="Gene3D" id="2.10.25.10">
    <property type="entry name" value="Laminin"/>
    <property type="match status" value="9"/>
</dbReference>
<dbReference type="InterPro" id="IPR045769">
    <property type="entry name" value="DNER_C"/>
</dbReference>
<dbReference type="InterPro" id="IPR001881">
    <property type="entry name" value="EGF-like_Ca-bd_dom"/>
</dbReference>
<dbReference type="InterPro" id="IPR013032">
    <property type="entry name" value="EGF-like_CS"/>
</dbReference>
<dbReference type="InterPro" id="IPR000742">
    <property type="entry name" value="EGF-like_dom"/>
</dbReference>
<dbReference type="InterPro" id="IPR000152">
    <property type="entry name" value="EGF-type_Asp/Asn_hydroxyl_site"/>
</dbReference>
<dbReference type="InterPro" id="IPR018097">
    <property type="entry name" value="EGF_Ca-bd_CS"/>
</dbReference>
<dbReference type="InterPro" id="IPR009030">
    <property type="entry name" value="Growth_fac_rcpt_cys_sf"/>
</dbReference>
<dbReference type="InterPro" id="IPR051022">
    <property type="entry name" value="Notch_Cell-Fate_Det"/>
</dbReference>
<dbReference type="PANTHER" id="PTHR24049">
    <property type="entry name" value="CRUMBS FAMILY MEMBER"/>
    <property type="match status" value="1"/>
</dbReference>
<dbReference type="PANTHER" id="PTHR24049:SF22">
    <property type="entry name" value="DROSOPHILA CRUMBS HOMOLOG"/>
    <property type="match status" value="1"/>
</dbReference>
<dbReference type="Pfam" id="PF19330">
    <property type="entry name" value="DNER_C"/>
    <property type="match status" value="1"/>
</dbReference>
<dbReference type="Pfam" id="PF00008">
    <property type="entry name" value="EGF"/>
    <property type="match status" value="7"/>
</dbReference>
<dbReference type="Pfam" id="PF12661">
    <property type="entry name" value="hEGF"/>
    <property type="match status" value="1"/>
</dbReference>
<dbReference type="PRINTS" id="PR00010">
    <property type="entry name" value="EGFBLOOD"/>
</dbReference>
<dbReference type="SMART" id="SM00181">
    <property type="entry name" value="EGF"/>
    <property type="match status" value="10"/>
</dbReference>
<dbReference type="SMART" id="SM00179">
    <property type="entry name" value="EGF_CA"/>
    <property type="match status" value="7"/>
</dbReference>
<dbReference type="SUPFAM" id="SSF57196">
    <property type="entry name" value="EGF/Laminin"/>
    <property type="match status" value="4"/>
</dbReference>
<dbReference type="SUPFAM" id="SSF57184">
    <property type="entry name" value="Growth factor receptor domain"/>
    <property type="match status" value="2"/>
</dbReference>
<dbReference type="PROSITE" id="PS00010">
    <property type="entry name" value="ASX_HYDROXYL"/>
    <property type="match status" value="2"/>
</dbReference>
<dbReference type="PROSITE" id="PS00022">
    <property type="entry name" value="EGF_1"/>
    <property type="match status" value="10"/>
</dbReference>
<dbReference type="PROSITE" id="PS01186">
    <property type="entry name" value="EGF_2"/>
    <property type="match status" value="7"/>
</dbReference>
<dbReference type="PROSITE" id="PS50026">
    <property type="entry name" value="EGF_3"/>
    <property type="match status" value="10"/>
</dbReference>
<dbReference type="PROSITE" id="PS01187">
    <property type="entry name" value="EGF_CA"/>
    <property type="match status" value="2"/>
</dbReference>
<proteinExistence type="evidence at protein level"/>
<keyword id="KW-0010">Activator</keyword>
<keyword id="KW-0106">Calcium</keyword>
<keyword id="KW-1003">Cell membrane</keyword>
<keyword id="KW-1015">Disulfide bond</keyword>
<keyword id="KW-0245">EGF-like domain</keyword>
<keyword id="KW-0325">Glycoprotein</keyword>
<keyword id="KW-0472">Membrane</keyword>
<keyword id="KW-0914">Notch signaling pathway</keyword>
<keyword id="KW-0597">Phosphoprotein</keyword>
<keyword id="KW-1267">Proteomics identification</keyword>
<keyword id="KW-0675">Receptor</keyword>
<keyword id="KW-1185">Reference proteome</keyword>
<keyword id="KW-0677">Repeat</keyword>
<keyword id="KW-0732">Signal</keyword>
<keyword id="KW-0812">Transmembrane</keyword>
<keyword id="KW-1133">Transmembrane helix</keyword>
<comment type="function">
    <text evidence="1">Activator of the NOTCH1 pathway. May mediate neuron-glia interaction during astrocytogenesis (By similarity).</text>
</comment>
<comment type="subunit">
    <text evidence="1">Interacts with AP1G1. Interacts with NOTCH1 (By similarity).</text>
</comment>
<comment type="interaction">
    <interactant intactId="EBI-2682727">
        <id>Q8NFT8</id>
    </interactant>
    <interactant intactId="EBI-350517">
        <id>Q9NR12</id>
        <label>PDLIM7</label>
    </interactant>
    <organismsDiffer>false</organismsDiffer>
    <experiments>3</experiments>
</comment>
<comment type="subcellular location">
    <subcellularLocation>
        <location>Cell membrane</location>
        <topology>Single-pass type I membrane protein</topology>
    </subcellularLocation>
    <text evidence="1">Present on the membrane of dendrites and cell bodies but excluded from axonal membrane. Also found in early endosomes in the somatodendritic region (By similarity).</text>
</comment>
<comment type="tissue specificity">
    <text evidence="5">Expressed in brain, spinal cord and adrenal gland.</text>
</comment>
<name>DNER_HUMAN</name>
<accession>Q8NFT8</accession>
<accession>A6NP39</accession>
<accession>Q53R88</accession>
<accession>Q53TP7</accession>
<accession>Q53TQ5</accession>
<accession>Q8IYT0</accession>
<accession>Q8TB42</accession>
<accession>Q9NTF1</accession>
<accession>Q9UDM2</accession>
<gene>
    <name type="primary">DNER</name>
    <name type="synonym">BET</name>
    <name type="ORF">UNQ262/PRO299</name>
</gene>
<reference key="1">
    <citation type="journal article" date="2002" name="J. Biol. Chem.">
        <title>Delta/notch-like epidermal growth factor (EGF)-related receptor, a novel EGF-like repeat-containing protein targeted to dendrites of developing and adult central nervous system neurons.</title>
        <authorList>
            <person name="Eiraku M."/>
            <person name="Hirata Y."/>
            <person name="Takeshima H."/>
            <person name="Hirano T."/>
            <person name="Kengaku M."/>
        </authorList>
    </citation>
    <scope>NUCLEOTIDE SEQUENCE [MRNA]</scope>
    <source>
        <tissue>Brain</tissue>
    </source>
</reference>
<reference key="2">
    <citation type="journal article" date="2003" name="Genome Res.">
        <title>The secreted protein discovery initiative (SPDI), a large-scale effort to identify novel human secreted and transmembrane proteins: a bioinformatics assessment.</title>
        <authorList>
            <person name="Clark H.F."/>
            <person name="Gurney A.L."/>
            <person name="Abaya E."/>
            <person name="Baker K."/>
            <person name="Baldwin D.T."/>
            <person name="Brush J."/>
            <person name="Chen J."/>
            <person name="Chow B."/>
            <person name="Chui C."/>
            <person name="Crowley C."/>
            <person name="Currell B."/>
            <person name="Deuel B."/>
            <person name="Dowd P."/>
            <person name="Eaton D."/>
            <person name="Foster J.S."/>
            <person name="Grimaldi C."/>
            <person name="Gu Q."/>
            <person name="Hass P.E."/>
            <person name="Heldens S."/>
            <person name="Huang A."/>
            <person name="Kim H.S."/>
            <person name="Klimowski L."/>
            <person name="Jin Y."/>
            <person name="Johnson S."/>
            <person name="Lee J."/>
            <person name="Lewis L."/>
            <person name="Liao D."/>
            <person name="Mark M.R."/>
            <person name="Robbie E."/>
            <person name="Sanchez C."/>
            <person name="Schoenfeld J."/>
            <person name="Seshagiri S."/>
            <person name="Simmons L."/>
            <person name="Singh J."/>
            <person name="Smith V."/>
            <person name="Stinson J."/>
            <person name="Vagts A."/>
            <person name="Vandlen R.L."/>
            <person name="Watanabe C."/>
            <person name="Wieand D."/>
            <person name="Woods K."/>
            <person name="Xie M.-H."/>
            <person name="Yansura D.G."/>
            <person name="Yi S."/>
            <person name="Yu G."/>
            <person name="Yuan J."/>
            <person name="Zhang M."/>
            <person name="Zhang Z."/>
            <person name="Goddard A.D."/>
            <person name="Wood W.I."/>
            <person name="Godowski P.J."/>
            <person name="Gray A.M."/>
        </authorList>
    </citation>
    <scope>NUCLEOTIDE SEQUENCE [LARGE SCALE MRNA]</scope>
</reference>
<reference key="3">
    <citation type="journal article" date="2005" name="Nature">
        <title>Generation and annotation of the DNA sequences of human chromosomes 2 and 4.</title>
        <authorList>
            <person name="Hillier L.W."/>
            <person name="Graves T.A."/>
            <person name="Fulton R.S."/>
            <person name="Fulton L.A."/>
            <person name="Pepin K.H."/>
            <person name="Minx P."/>
            <person name="Wagner-McPherson C."/>
            <person name="Layman D."/>
            <person name="Wylie K."/>
            <person name="Sekhon M."/>
            <person name="Becker M.C."/>
            <person name="Fewell G.A."/>
            <person name="Delehaunty K.D."/>
            <person name="Miner T.L."/>
            <person name="Nash W.E."/>
            <person name="Kremitzki C."/>
            <person name="Oddy L."/>
            <person name="Du H."/>
            <person name="Sun H."/>
            <person name="Bradshaw-Cordum H."/>
            <person name="Ali J."/>
            <person name="Carter J."/>
            <person name="Cordes M."/>
            <person name="Harris A."/>
            <person name="Isak A."/>
            <person name="van Brunt A."/>
            <person name="Nguyen C."/>
            <person name="Du F."/>
            <person name="Courtney L."/>
            <person name="Kalicki J."/>
            <person name="Ozersky P."/>
            <person name="Abbott S."/>
            <person name="Armstrong J."/>
            <person name="Belter E.A."/>
            <person name="Caruso L."/>
            <person name="Cedroni M."/>
            <person name="Cotton M."/>
            <person name="Davidson T."/>
            <person name="Desai A."/>
            <person name="Elliott G."/>
            <person name="Erb T."/>
            <person name="Fronick C."/>
            <person name="Gaige T."/>
            <person name="Haakenson W."/>
            <person name="Haglund K."/>
            <person name="Holmes A."/>
            <person name="Harkins R."/>
            <person name="Kim K."/>
            <person name="Kruchowski S.S."/>
            <person name="Strong C.M."/>
            <person name="Grewal N."/>
            <person name="Goyea E."/>
            <person name="Hou S."/>
            <person name="Levy A."/>
            <person name="Martinka S."/>
            <person name="Mead K."/>
            <person name="McLellan M.D."/>
            <person name="Meyer R."/>
            <person name="Randall-Maher J."/>
            <person name="Tomlinson C."/>
            <person name="Dauphin-Kohlberg S."/>
            <person name="Kozlowicz-Reilly A."/>
            <person name="Shah N."/>
            <person name="Swearengen-Shahid S."/>
            <person name="Snider J."/>
            <person name="Strong J.T."/>
            <person name="Thompson J."/>
            <person name="Yoakum M."/>
            <person name="Leonard S."/>
            <person name="Pearman C."/>
            <person name="Trani L."/>
            <person name="Radionenko M."/>
            <person name="Waligorski J.E."/>
            <person name="Wang C."/>
            <person name="Rock S.M."/>
            <person name="Tin-Wollam A.-M."/>
            <person name="Maupin R."/>
            <person name="Latreille P."/>
            <person name="Wendl M.C."/>
            <person name="Yang S.-P."/>
            <person name="Pohl C."/>
            <person name="Wallis J.W."/>
            <person name="Spieth J."/>
            <person name="Bieri T.A."/>
            <person name="Berkowicz N."/>
            <person name="Nelson J.O."/>
            <person name="Osborne J."/>
            <person name="Ding L."/>
            <person name="Meyer R."/>
            <person name="Sabo A."/>
            <person name="Shotland Y."/>
            <person name="Sinha P."/>
            <person name="Wohldmann P.E."/>
            <person name="Cook L.L."/>
            <person name="Hickenbotham M.T."/>
            <person name="Eldred J."/>
            <person name="Williams D."/>
            <person name="Jones T.A."/>
            <person name="She X."/>
            <person name="Ciccarelli F.D."/>
            <person name="Izaurralde E."/>
            <person name="Taylor J."/>
            <person name="Schmutz J."/>
            <person name="Myers R.M."/>
            <person name="Cox D.R."/>
            <person name="Huang X."/>
            <person name="McPherson J.D."/>
            <person name="Mardis E.R."/>
            <person name="Clifton S.W."/>
            <person name="Warren W.C."/>
            <person name="Chinwalla A.T."/>
            <person name="Eddy S.R."/>
            <person name="Marra M.A."/>
            <person name="Ovcharenko I."/>
            <person name="Furey T.S."/>
            <person name="Miller W."/>
            <person name="Eichler E.E."/>
            <person name="Bork P."/>
            <person name="Suyama M."/>
            <person name="Torrents D."/>
            <person name="Waterston R.H."/>
            <person name="Wilson R.K."/>
        </authorList>
    </citation>
    <scope>NUCLEOTIDE SEQUENCE [LARGE SCALE GENOMIC DNA]</scope>
</reference>
<reference key="4">
    <citation type="submission" date="2005-07" db="EMBL/GenBank/DDBJ databases">
        <authorList>
            <person name="Mural R.J."/>
            <person name="Istrail S."/>
            <person name="Sutton G.G."/>
            <person name="Florea L."/>
            <person name="Halpern A.L."/>
            <person name="Mobarry C.M."/>
            <person name="Lippert R."/>
            <person name="Walenz B."/>
            <person name="Shatkay H."/>
            <person name="Dew I."/>
            <person name="Miller J.R."/>
            <person name="Flanigan M.J."/>
            <person name="Edwards N.J."/>
            <person name="Bolanos R."/>
            <person name="Fasulo D."/>
            <person name="Halldorsson B.V."/>
            <person name="Hannenhalli S."/>
            <person name="Turner R."/>
            <person name="Yooseph S."/>
            <person name="Lu F."/>
            <person name="Nusskern D.R."/>
            <person name="Shue B.C."/>
            <person name="Zheng X.H."/>
            <person name="Zhong F."/>
            <person name="Delcher A.L."/>
            <person name="Huson D.H."/>
            <person name="Kravitz S.A."/>
            <person name="Mouchard L."/>
            <person name="Reinert K."/>
            <person name="Remington K.A."/>
            <person name="Clark A.G."/>
            <person name="Waterman M.S."/>
            <person name="Eichler E.E."/>
            <person name="Adams M.D."/>
            <person name="Hunkapiller M.W."/>
            <person name="Myers E.W."/>
            <person name="Venter J.C."/>
        </authorList>
    </citation>
    <scope>NUCLEOTIDE SEQUENCE [LARGE SCALE GENOMIC DNA]</scope>
</reference>
<reference key="5">
    <citation type="journal article" date="2004" name="Genome Res.">
        <title>The status, quality, and expansion of the NIH full-length cDNA project: the Mammalian Gene Collection (MGC).</title>
        <authorList>
            <consortium name="The MGC Project Team"/>
        </authorList>
    </citation>
    <scope>NUCLEOTIDE SEQUENCE [LARGE SCALE MRNA]</scope>
    <scope>VARIANT LEU-433</scope>
    <source>
        <tissue>Brain</tissue>
    </source>
</reference>
<reference key="6">
    <citation type="journal article" date="2007" name="BMC Genomics">
        <title>The full-ORF clone resource of the German cDNA consortium.</title>
        <authorList>
            <person name="Bechtel S."/>
            <person name="Rosenfelder H."/>
            <person name="Duda A."/>
            <person name="Schmidt C.P."/>
            <person name="Ernst U."/>
            <person name="Wellenreuther R."/>
            <person name="Mehrle A."/>
            <person name="Schuster C."/>
            <person name="Bahr A."/>
            <person name="Bloecker H."/>
            <person name="Heubner D."/>
            <person name="Hoerlein A."/>
            <person name="Michel G."/>
            <person name="Wedler H."/>
            <person name="Koehrer K."/>
            <person name="Ottenwaelder B."/>
            <person name="Poustka A."/>
            <person name="Wiemann S."/>
            <person name="Schupp I."/>
        </authorList>
    </citation>
    <scope>NUCLEOTIDE SEQUENCE [LARGE SCALE MRNA] OF 486-737</scope>
    <source>
        <tissue>Amygdala</tissue>
    </source>
</reference>
<reference key="7">
    <citation type="journal article" date="2002" name="NeuroReport">
        <title>BET, a novel neuronal transmembrane protein with multiple EGF-like motifs.</title>
        <authorList>
            <person name="Nishizumi H."/>
            <person name="Komiyama T."/>
            <person name="Miyabayashi T."/>
            <person name="Sakano S."/>
            <person name="Sakano H."/>
        </authorList>
    </citation>
    <scope>TISSUE SPECIFICITY</scope>
</reference>
<reference key="8">
    <citation type="journal article" date="2006" name="J. Proteome Res.">
        <title>Identification of N-linked glycoproteins in human saliva by glycoprotein capture and mass spectrometry.</title>
        <authorList>
            <person name="Ramachandran P."/>
            <person name="Boontheung P."/>
            <person name="Xie Y."/>
            <person name="Sondej M."/>
            <person name="Wong D.T."/>
            <person name="Loo J.A."/>
        </authorList>
    </citation>
    <scope>GLYCOSYLATION [LARGE SCALE ANALYSIS] AT ASN-223</scope>
    <source>
        <tissue>Saliva</tissue>
    </source>
</reference>
<reference key="9">
    <citation type="journal article" date="2008" name="Proc. Natl. Acad. Sci. U.S.A.">
        <title>A quantitative atlas of mitotic phosphorylation.</title>
        <authorList>
            <person name="Dephoure N."/>
            <person name="Zhou C."/>
            <person name="Villen J."/>
            <person name="Beausoleil S.A."/>
            <person name="Bakalarski C.E."/>
            <person name="Elledge S.J."/>
            <person name="Gygi S.P."/>
        </authorList>
    </citation>
    <scope>IDENTIFICATION BY MASS SPECTROMETRY [LARGE SCALE ANALYSIS]</scope>
    <source>
        <tissue>Cervix carcinoma</tissue>
    </source>
</reference>
<sequence length="737" mass="78475">MQPRRAQAPGAQLLPALALLLLLLGAGPRGSSLANPVPAAPLSAPGPCAAQPCRNGGVCTSRPEPDPQHPAPAGEPGYSCTCPAGISGANCQLVADPCASNPCHHGNCSSSSSSSSDGYLCICNEGYEGPNCEQALPSLPATGWTESMAPRQLQPVPATQEPDKILPRSQATVTLPTWQPKTGQKVVEMKWDQVEVIPDIACGNASSNSSAGGRLVSFEVPQNTSVKIRQDATASLILLWKVTATGFQQCSLIDGRSVTPLQASGGLVLLEEMLALGNNHFIGFVNDSVTKSIVALRLTLVVKVSTCVPGESHANDLECSGKGKCTTKPSEATFSCTCEEQYVGTFCEEYDACQRKPCQNNASCIDANEKQDGSNFTCVCLPGYTGELCQSKIDYCILDPCRNGATCISSLSGFTCQCPEGYFGSACEEKVDPCASSPCQNNGTCYVDGVHFTCNCSPGFTGPTCAQLIDFCALSPCAHGTCRSVGTSYKCLCDPGYHGLYCEEEYNECLSAPCLNAATCRDLVNGYECVCLAEYKGTHCELYKDPCANVSCLNGATCDSDGLNGTCICAPGFTGEECDIDINECDSNPCHHGGSCLDQPNGYNCHCPHGWVGANCEIHLQWKSGHMAESLTNMPRHSLYIIIGALCVAFILMLIILIVGICRISRIEYQGSSRPAYEEFYNCRSIDSEFSNAIASIRHARFGKKSRPAMYDVSPIAYEDYSPDDKPLVTLIKTKDL</sequence>
<evidence type="ECO:0000250" key="1"/>
<evidence type="ECO:0000250" key="2">
    <source>
        <dbReference type="UniProtKB" id="Q8JZM4"/>
    </source>
</evidence>
<evidence type="ECO:0000255" key="3"/>
<evidence type="ECO:0000255" key="4">
    <source>
        <dbReference type="PROSITE-ProRule" id="PRU00076"/>
    </source>
</evidence>
<evidence type="ECO:0000269" key="5">
    <source>
    </source>
</evidence>
<evidence type="ECO:0000269" key="6">
    <source>
    </source>
</evidence>
<evidence type="ECO:0000269" key="7">
    <source>
    </source>
</evidence>
<organism>
    <name type="scientific">Homo sapiens</name>
    <name type="common">Human</name>
    <dbReference type="NCBI Taxonomy" id="9606"/>
    <lineage>
        <taxon>Eukaryota</taxon>
        <taxon>Metazoa</taxon>
        <taxon>Chordata</taxon>
        <taxon>Craniata</taxon>
        <taxon>Vertebrata</taxon>
        <taxon>Euteleostomi</taxon>
        <taxon>Mammalia</taxon>
        <taxon>Eutheria</taxon>
        <taxon>Euarchontoglires</taxon>
        <taxon>Primates</taxon>
        <taxon>Haplorrhini</taxon>
        <taxon>Catarrhini</taxon>
        <taxon>Hominidae</taxon>
        <taxon>Homo</taxon>
    </lineage>
</organism>
<protein>
    <recommendedName>
        <fullName>Delta and Notch-like epidermal growth factor-related receptor</fullName>
    </recommendedName>
</protein>